<proteinExistence type="inferred from homology"/>
<name>DAPH_GEOSW</name>
<keyword id="KW-0012">Acyltransferase</keyword>
<keyword id="KW-0028">Amino-acid biosynthesis</keyword>
<keyword id="KW-0220">Diaminopimelate biosynthesis</keyword>
<keyword id="KW-0457">Lysine biosynthesis</keyword>
<keyword id="KW-0677">Repeat</keyword>
<keyword id="KW-0808">Transferase</keyword>
<dbReference type="EC" id="2.3.1.89" evidence="1"/>
<dbReference type="EMBL" id="CP001638">
    <property type="protein sequence ID" value="ACS23807.1"/>
    <property type="molecule type" value="Genomic_DNA"/>
</dbReference>
<dbReference type="SMR" id="C5D826"/>
<dbReference type="STRING" id="471223.GWCH70_0944"/>
<dbReference type="KEGG" id="gwc:GWCH70_0944"/>
<dbReference type="eggNOG" id="COG2171">
    <property type="taxonomic scope" value="Bacteria"/>
</dbReference>
<dbReference type="HOGENOM" id="CLU_103751_0_0_9"/>
<dbReference type="OrthoDB" id="9788080at2"/>
<dbReference type="UniPathway" id="UPA00034">
    <property type="reaction ID" value="UER00022"/>
</dbReference>
<dbReference type="GO" id="GO:0047200">
    <property type="term" value="F:tetrahydrodipicolinate N-acetyltransferase activity"/>
    <property type="evidence" value="ECO:0007669"/>
    <property type="project" value="UniProtKB-EC"/>
</dbReference>
<dbReference type="GO" id="GO:0019877">
    <property type="term" value="P:diaminopimelate biosynthetic process"/>
    <property type="evidence" value="ECO:0007669"/>
    <property type="project" value="UniProtKB-UniRule"/>
</dbReference>
<dbReference type="GO" id="GO:0009089">
    <property type="term" value="P:lysine biosynthetic process via diaminopimelate"/>
    <property type="evidence" value="ECO:0007669"/>
    <property type="project" value="UniProtKB-UniRule"/>
</dbReference>
<dbReference type="CDD" id="cd03350">
    <property type="entry name" value="LbH_THP_succinylT"/>
    <property type="match status" value="1"/>
</dbReference>
<dbReference type="Gene3D" id="2.160.10.10">
    <property type="entry name" value="Hexapeptide repeat proteins"/>
    <property type="match status" value="1"/>
</dbReference>
<dbReference type="Gene3D" id="3.30.70.250">
    <property type="entry name" value="Malonyl-CoA ACP transacylase, ACP-binding"/>
    <property type="match status" value="1"/>
</dbReference>
<dbReference type="HAMAP" id="MF_01691">
    <property type="entry name" value="DapH"/>
    <property type="match status" value="1"/>
</dbReference>
<dbReference type="InterPro" id="IPR019873">
    <property type="entry name" value="DapH"/>
</dbReference>
<dbReference type="InterPro" id="IPR013710">
    <property type="entry name" value="DapH_N"/>
</dbReference>
<dbReference type="InterPro" id="IPR001451">
    <property type="entry name" value="Hexapep"/>
</dbReference>
<dbReference type="InterPro" id="IPR018357">
    <property type="entry name" value="Hexapep_transf_CS"/>
</dbReference>
<dbReference type="InterPro" id="IPR050179">
    <property type="entry name" value="Trans_hexapeptide_repeat"/>
</dbReference>
<dbReference type="InterPro" id="IPR011004">
    <property type="entry name" value="Trimer_LpxA-like_sf"/>
</dbReference>
<dbReference type="NCBIfam" id="TIGR03532">
    <property type="entry name" value="DapD_Ac"/>
    <property type="match status" value="1"/>
</dbReference>
<dbReference type="PANTHER" id="PTHR43300:SF10">
    <property type="entry name" value="2,3,4,5-TETRAHYDROPYRIDINE-2,6-DICARBOXYLATE N-ACETYLTRANSFERASE"/>
    <property type="match status" value="1"/>
</dbReference>
<dbReference type="PANTHER" id="PTHR43300">
    <property type="entry name" value="ACETYLTRANSFERASE"/>
    <property type="match status" value="1"/>
</dbReference>
<dbReference type="Pfam" id="PF08503">
    <property type="entry name" value="DapH_N"/>
    <property type="match status" value="1"/>
</dbReference>
<dbReference type="Pfam" id="PF00132">
    <property type="entry name" value="Hexapep"/>
    <property type="match status" value="1"/>
</dbReference>
<dbReference type="Pfam" id="PF14602">
    <property type="entry name" value="Hexapep_2"/>
    <property type="match status" value="2"/>
</dbReference>
<dbReference type="SUPFAM" id="SSF51161">
    <property type="entry name" value="Trimeric LpxA-like enzymes"/>
    <property type="match status" value="1"/>
</dbReference>
<dbReference type="PROSITE" id="PS00101">
    <property type="entry name" value="HEXAPEP_TRANSFERASES"/>
    <property type="match status" value="1"/>
</dbReference>
<evidence type="ECO:0000255" key="1">
    <source>
        <dbReference type="HAMAP-Rule" id="MF_01691"/>
    </source>
</evidence>
<sequence>MKMMDANEIISFIQNSKKSTPVKVYIKGSLEGIDFGPSAKTFITGNTGVVFGEWQEIQAALEANKEKIDDYVIENDRRNSAIPLLDLKGVKARIEPGAIIRDQVEIGDNAVIMMGAVINIGAVVGEGTMIDMNAVLGGRATVGKNCHVGAGAVLAGVIEPPSAKPVIVEDDVVIGANAVILEGVTVGKGAVVAAGAIVVEDVPPYTVVAGVPARVIKQIDEKTRAKTEIKQELRQL</sequence>
<reference key="1">
    <citation type="submission" date="2009-06" db="EMBL/GenBank/DDBJ databases">
        <title>Complete sequence of chromosome of Geopacillus sp. WCH70.</title>
        <authorList>
            <consortium name="US DOE Joint Genome Institute"/>
            <person name="Lucas S."/>
            <person name="Copeland A."/>
            <person name="Lapidus A."/>
            <person name="Glavina del Rio T."/>
            <person name="Dalin E."/>
            <person name="Tice H."/>
            <person name="Bruce D."/>
            <person name="Goodwin L."/>
            <person name="Pitluck S."/>
            <person name="Chertkov O."/>
            <person name="Brettin T."/>
            <person name="Detter J.C."/>
            <person name="Han C."/>
            <person name="Larimer F."/>
            <person name="Land M."/>
            <person name="Hauser L."/>
            <person name="Kyrpides N."/>
            <person name="Mikhailova N."/>
            <person name="Brumm P."/>
            <person name="Mead D.A."/>
            <person name="Richardson P."/>
        </authorList>
    </citation>
    <scope>NUCLEOTIDE SEQUENCE [LARGE SCALE GENOMIC DNA]</scope>
    <source>
        <strain>WCH70</strain>
    </source>
</reference>
<organism>
    <name type="scientific">Geobacillus sp. (strain WCH70)</name>
    <dbReference type="NCBI Taxonomy" id="471223"/>
    <lineage>
        <taxon>Bacteria</taxon>
        <taxon>Bacillati</taxon>
        <taxon>Bacillota</taxon>
        <taxon>Bacilli</taxon>
        <taxon>Bacillales</taxon>
        <taxon>Anoxybacillaceae</taxon>
        <taxon>Geobacillus</taxon>
    </lineage>
</organism>
<feature type="chain" id="PRO_1000215929" description="2,3,4,5-tetrahydropyridine-2,6-dicarboxylate N-acetyltransferase">
    <location>
        <begin position="1"/>
        <end position="236"/>
    </location>
</feature>
<comment type="function">
    <text evidence="1">Catalyzes the transfer of an acetyl group from acetyl-CoA to tetrahydrodipicolinate.</text>
</comment>
<comment type="catalytic activity">
    <reaction evidence="1">
        <text>(S)-2,3,4,5-tetrahydrodipicolinate + acetyl-CoA + H2O = L-2-acetamido-6-oxoheptanedioate + CoA</text>
        <dbReference type="Rhea" id="RHEA:13085"/>
        <dbReference type="ChEBI" id="CHEBI:15377"/>
        <dbReference type="ChEBI" id="CHEBI:16845"/>
        <dbReference type="ChEBI" id="CHEBI:57287"/>
        <dbReference type="ChEBI" id="CHEBI:57288"/>
        <dbReference type="ChEBI" id="CHEBI:58117"/>
        <dbReference type="EC" id="2.3.1.89"/>
    </reaction>
</comment>
<comment type="pathway">
    <text evidence="1">Amino-acid biosynthesis; L-lysine biosynthesis via DAP pathway; LL-2,6-diaminopimelate from (S)-tetrahydrodipicolinate (acetylase route): step 1/3.</text>
</comment>
<comment type="similarity">
    <text evidence="1">Belongs to the transferase hexapeptide repeat family. DapH subfamily.</text>
</comment>
<gene>
    <name evidence="1" type="primary">dapH</name>
    <name type="ordered locus">GWCH70_0944</name>
</gene>
<protein>
    <recommendedName>
        <fullName evidence="1">2,3,4,5-tetrahydropyridine-2,6-dicarboxylate N-acetyltransferase</fullName>
        <ecNumber evidence="1">2.3.1.89</ecNumber>
    </recommendedName>
    <alternativeName>
        <fullName evidence="1">Tetrahydrodipicolinate N-acetyltransferase</fullName>
        <shortName evidence="1">THP acetyltransferase</shortName>
        <shortName evidence="1">Tetrahydropicolinate acetylase</shortName>
    </alternativeName>
</protein>
<accession>C5D826</accession>